<feature type="chain" id="PRO_1000017271" description="5-methyltetrahydropteroyltriglutamate--homocysteine methyltransferase">
    <location>
        <begin position="1"/>
        <end position="754"/>
    </location>
</feature>
<feature type="active site" description="Proton donor" evidence="1">
    <location>
        <position position="694"/>
    </location>
</feature>
<feature type="binding site" evidence="1">
    <location>
        <begin position="17"/>
        <end position="20"/>
    </location>
    <ligand>
        <name>5-methyltetrahydropteroyltri-L-glutamate</name>
        <dbReference type="ChEBI" id="CHEBI:58207"/>
    </ligand>
</feature>
<feature type="binding site" evidence="1">
    <location>
        <position position="117"/>
    </location>
    <ligand>
        <name>5-methyltetrahydropteroyltri-L-glutamate</name>
        <dbReference type="ChEBI" id="CHEBI:58207"/>
    </ligand>
</feature>
<feature type="binding site" evidence="1">
    <location>
        <begin position="431"/>
        <end position="433"/>
    </location>
    <ligand>
        <name>L-homocysteine</name>
        <dbReference type="ChEBI" id="CHEBI:58199"/>
    </ligand>
</feature>
<feature type="binding site" evidence="1">
    <location>
        <begin position="431"/>
        <end position="433"/>
    </location>
    <ligand>
        <name>L-methionine</name>
        <dbReference type="ChEBI" id="CHEBI:57844"/>
    </ligand>
</feature>
<feature type="binding site" evidence="1">
    <location>
        <position position="484"/>
    </location>
    <ligand>
        <name>L-homocysteine</name>
        <dbReference type="ChEBI" id="CHEBI:58199"/>
    </ligand>
</feature>
<feature type="binding site" evidence="1">
    <location>
        <position position="484"/>
    </location>
    <ligand>
        <name>L-methionine</name>
        <dbReference type="ChEBI" id="CHEBI:57844"/>
    </ligand>
</feature>
<feature type="binding site" evidence="1">
    <location>
        <begin position="515"/>
        <end position="516"/>
    </location>
    <ligand>
        <name>5-methyltetrahydropteroyltri-L-glutamate</name>
        <dbReference type="ChEBI" id="CHEBI:58207"/>
    </ligand>
</feature>
<feature type="binding site" evidence="1">
    <location>
        <position position="561"/>
    </location>
    <ligand>
        <name>5-methyltetrahydropteroyltri-L-glutamate</name>
        <dbReference type="ChEBI" id="CHEBI:58207"/>
    </ligand>
</feature>
<feature type="binding site" evidence="1">
    <location>
        <position position="599"/>
    </location>
    <ligand>
        <name>L-homocysteine</name>
        <dbReference type="ChEBI" id="CHEBI:58199"/>
    </ligand>
</feature>
<feature type="binding site" evidence="1">
    <location>
        <position position="599"/>
    </location>
    <ligand>
        <name>L-methionine</name>
        <dbReference type="ChEBI" id="CHEBI:57844"/>
    </ligand>
</feature>
<feature type="binding site" evidence="1">
    <location>
        <position position="605"/>
    </location>
    <ligand>
        <name>5-methyltetrahydropteroyltri-L-glutamate</name>
        <dbReference type="ChEBI" id="CHEBI:58207"/>
    </ligand>
</feature>
<feature type="binding site" evidence="1">
    <location>
        <position position="641"/>
    </location>
    <ligand>
        <name>Zn(2+)</name>
        <dbReference type="ChEBI" id="CHEBI:29105"/>
        <note>catalytic</note>
    </ligand>
</feature>
<feature type="binding site" evidence="1">
    <location>
        <position position="643"/>
    </location>
    <ligand>
        <name>Zn(2+)</name>
        <dbReference type="ChEBI" id="CHEBI:29105"/>
        <note>catalytic</note>
    </ligand>
</feature>
<feature type="binding site" evidence="1">
    <location>
        <position position="665"/>
    </location>
    <ligand>
        <name>Zn(2+)</name>
        <dbReference type="ChEBI" id="CHEBI:29105"/>
        <note>catalytic</note>
    </ligand>
</feature>
<feature type="binding site" evidence="1">
    <location>
        <position position="726"/>
    </location>
    <ligand>
        <name>Zn(2+)</name>
        <dbReference type="ChEBI" id="CHEBI:29105"/>
        <note>catalytic</note>
    </ligand>
</feature>
<protein>
    <recommendedName>
        <fullName evidence="1">5-methyltetrahydropteroyltriglutamate--homocysteine methyltransferase</fullName>
        <ecNumber evidence="1">2.1.1.14</ecNumber>
    </recommendedName>
    <alternativeName>
        <fullName evidence="1">Cobalamin-independent methionine synthase</fullName>
    </alternativeName>
    <alternativeName>
        <fullName evidence="1">Methionine synthase, vitamin-B12 independent isozyme</fullName>
    </alternativeName>
</protein>
<organism>
    <name type="scientific">Salmonella paratyphi A (strain ATCC 9150 / SARB42)</name>
    <dbReference type="NCBI Taxonomy" id="295319"/>
    <lineage>
        <taxon>Bacteria</taxon>
        <taxon>Pseudomonadati</taxon>
        <taxon>Pseudomonadota</taxon>
        <taxon>Gammaproteobacteria</taxon>
        <taxon>Enterobacterales</taxon>
        <taxon>Enterobacteriaceae</taxon>
        <taxon>Salmonella</taxon>
    </lineage>
</organism>
<dbReference type="EC" id="2.1.1.14" evidence="1"/>
<dbReference type="EMBL" id="CP000026">
    <property type="protein sequence ID" value="AAV79582.1"/>
    <property type="molecule type" value="Genomic_DNA"/>
</dbReference>
<dbReference type="RefSeq" id="WP_000154177.1">
    <property type="nucleotide sequence ID" value="NC_006511.1"/>
</dbReference>
<dbReference type="SMR" id="Q5PKP9"/>
<dbReference type="KEGG" id="spt:SPA3806"/>
<dbReference type="HOGENOM" id="CLU_013175_0_0_6"/>
<dbReference type="UniPathway" id="UPA00051">
    <property type="reaction ID" value="UER00082"/>
</dbReference>
<dbReference type="Proteomes" id="UP000008185">
    <property type="component" value="Chromosome"/>
</dbReference>
<dbReference type="GO" id="GO:0003871">
    <property type="term" value="F:5-methyltetrahydropteroyltriglutamate-homocysteine S-methyltransferase activity"/>
    <property type="evidence" value="ECO:0007669"/>
    <property type="project" value="UniProtKB-UniRule"/>
</dbReference>
<dbReference type="GO" id="GO:0008270">
    <property type="term" value="F:zinc ion binding"/>
    <property type="evidence" value="ECO:0007669"/>
    <property type="project" value="InterPro"/>
</dbReference>
<dbReference type="GO" id="GO:0009086">
    <property type="term" value="P:methionine biosynthetic process"/>
    <property type="evidence" value="ECO:0007669"/>
    <property type="project" value="UniProtKB-UniRule"/>
</dbReference>
<dbReference type="GO" id="GO:0032259">
    <property type="term" value="P:methylation"/>
    <property type="evidence" value="ECO:0007669"/>
    <property type="project" value="UniProtKB-KW"/>
</dbReference>
<dbReference type="CDD" id="cd03311">
    <property type="entry name" value="CIMS_C_terminal_like"/>
    <property type="match status" value="1"/>
</dbReference>
<dbReference type="CDD" id="cd03312">
    <property type="entry name" value="CIMS_N_terminal_like"/>
    <property type="match status" value="1"/>
</dbReference>
<dbReference type="FunFam" id="3.20.20.210:FF:000002">
    <property type="entry name" value="5-methyltetrahydropteroyltriglutamate--homocysteine methyltransferase"/>
    <property type="match status" value="1"/>
</dbReference>
<dbReference type="FunFam" id="3.20.20.210:FF:000003">
    <property type="entry name" value="5-methyltetrahydropteroyltriglutamate--homocysteine methyltransferase"/>
    <property type="match status" value="1"/>
</dbReference>
<dbReference type="Gene3D" id="3.20.20.210">
    <property type="match status" value="2"/>
</dbReference>
<dbReference type="HAMAP" id="MF_00172">
    <property type="entry name" value="Meth_synth"/>
    <property type="match status" value="1"/>
</dbReference>
<dbReference type="InterPro" id="IPR013215">
    <property type="entry name" value="Cbl-indep_Met_Synth_N"/>
</dbReference>
<dbReference type="InterPro" id="IPR006276">
    <property type="entry name" value="Cobalamin-indep_Met_synthase"/>
</dbReference>
<dbReference type="InterPro" id="IPR002629">
    <property type="entry name" value="Met_Synth_C/arc"/>
</dbReference>
<dbReference type="InterPro" id="IPR038071">
    <property type="entry name" value="UROD/MetE-like_sf"/>
</dbReference>
<dbReference type="NCBIfam" id="TIGR01371">
    <property type="entry name" value="met_syn_B12ind"/>
    <property type="match status" value="1"/>
</dbReference>
<dbReference type="NCBIfam" id="NF003556">
    <property type="entry name" value="PRK05222.1"/>
    <property type="match status" value="1"/>
</dbReference>
<dbReference type="PANTHER" id="PTHR30519">
    <property type="entry name" value="5-METHYLTETRAHYDROPTEROYLTRIGLUTAMATE--HOMOCYSTEINE METHYLTRANSFERASE"/>
    <property type="match status" value="1"/>
</dbReference>
<dbReference type="Pfam" id="PF08267">
    <property type="entry name" value="Meth_synt_1"/>
    <property type="match status" value="1"/>
</dbReference>
<dbReference type="Pfam" id="PF01717">
    <property type="entry name" value="Meth_synt_2"/>
    <property type="match status" value="1"/>
</dbReference>
<dbReference type="PIRSF" id="PIRSF000382">
    <property type="entry name" value="MeTrfase_B12_ind"/>
    <property type="match status" value="1"/>
</dbReference>
<dbReference type="SUPFAM" id="SSF51726">
    <property type="entry name" value="UROD/MetE-like"/>
    <property type="match status" value="2"/>
</dbReference>
<keyword id="KW-0028">Amino-acid biosynthesis</keyword>
<keyword id="KW-0479">Metal-binding</keyword>
<keyword id="KW-0486">Methionine biosynthesis</keyword>
<keyword id="KW-0489">Methyltransferase</keyword>
<keyword id="KW-0677">Repeat</keyword>
<keyword id="KW-0808">Transferase</keyword>
<keyword id="KW-0862">Zinc</keyword>
<name>METE_SALPA</name>
<comment type="function">
    <text evidence="1">Catalyzes the transfer of a methyl group from 5-methyltetrahydrofolate to homocysteine resulting in methionine formation.</text>
</comment>
<comment type="catalytic activity">
    <reaction evidence="1">
        <text>5-methyltetrahydropteroyltri-L-glutamate + L-homocysteine = tetrahydropteroyltri-L-glutamate + L-methionine</text>
        <dbReference type="Rhea" id="RHEA:21196"/>
        <dbReference type="ChEBI" id="CHEBI:57844"/>
        <dbReference type="ChEBI" id="CHEBI:58140"/>
        <dbReference type="ChEBI" id="CHEBI:58199"/>
        <dbReference type="ChEBI" id="CHEBI:58207"/>
        <dbReference type="EC" id="2.1.1.14"/>
    </reaction>
</comment>
<comment type="cofactor">
    <cofactor evidence="1">
        <name>Zn(2+)</name>
        <dbReference type="ChEBI" id="CHEBI:29105"/>
    </cofactor>
    <text evidence="1">Binds 1 zinc ion per subunit.</text>
</comment>
<comment type="pathway">
    <text evidence="1">Amino-acid biosynthesis; L-methionine biosynthesis via de novo pathway; L-methionine from L-homocysteine (MetE route): step 1/1.</text>
</comment>
<comment type="similarity">
    <text evidence="1">Belongs to the vitamin-B12 independent methionine synthase family.</text>
</comment>
<reference key="1">
    <citation type="journal article" date="2004" name="Nat. Genet.">
        <title>Comparison of genome degradation in Paratyphi A and Typhi, human-restricted serovars of Salmonella enterica that cause typhoid.</title>
        <authorList>
            <person name="McClelland M."/>
            <person name="Sanderson K.E."/>
            <person name="Clifton S.W."/>
            <person name="Latreille P."/>
            <person name="Porwollik S."/>
            <person name="Sabo A."/>
            <person name="Meyer R."/>
            <person name="Bieri T."/>
            <person name="Ozersky P."/>
            <person name="McLellan M."/>
            <person name="Harkins C.R."/>
            <person name="Wang C."/>
            <person name="Nguyen C."/>
            <person name="Berghoff A."/>
            <person name="Elliott G."/>
            <person name="Kohlberg S."/>
            <person name="Strong C."/>
            <person name="Du F."/>
            <person name="Carter J."/>
            <person name="Kremizki C."/>
            <person name="Layman D."/>
            <person name="Leonard S."/>
            <person name="Sun H."/>
            <person name="Fulton L."/>
            <person name="Nash W."/>
            <person name="Miner T."/>
            <person name="Minx P."/>
            <person name="Delehaunty K."/>
            <person name="Fronick C."/>
            <person name="Magrini V."/>
            <person name="Nhan M."/>
            <person name="Warren W."/>
            <person name="Florea L."/>
            <person name="Spieth J."/>
            <person name="Wilson R.K."/>
        </authorList>
    </citation>
    <scope>NUCLEOTIDE SEQUENCE [LARGE SCALE GENOMIC DNA]</scope>
    <source>
        <strain>ATCC 9150 / SARB42</strain>
    </source>
</reference>
<sequence>MTILTHTLGFPRVGLRRELKKAQESYWAGNSTREALLAVGRELRARHWEQQKQAGIDLLPVGDFAWYDHVLTTSLLLGNVPARHQNNDGSVDIDTLFRIGRGRAPTGEPAAAAEMTKWFNTNYHYIVPEFSKGQQFRLTWTQLLEEVDEALALGHKIKPVLLGPVTYLWLGKVKGEPFDRLTLLKDILPVYQHVLAELAKRGIEWVQIDELALVLELPQAWLDAFKPAYDALAGQVKLLLTTYFEGVTPNLDTIIALPAQGLHVDLIHGKDDVAELHQRLPVDWLLSAGLINGRNVWRADLTEKYAQINALVGKRALWVASSCSLLHSPIDLSVETRLDTEVKSWFAFALQKCGELALLRDALNSGETAALEEWSAPIQARRHSRRVHNAAVEKRLAAITAQDSQRENPYEVRAEAQRARFKLPAWPTTTIGSFPQTTEIRGLRLDFKKGNLDANNYRTGIAEHIKQAIIEQERLGLDVLVHGEAERNDMVEYFGEHLDGFVFTQNGWVQSYGSRCVKPPVVIGDISRPAPITVEWAKYAQSLTDKPVKGMLTGPVTILCWSFPREDVTRETIAKQIALALRDEVADLEAAGIGIIQIDEPALREGLPLRRSDWDAYLEWGVEAFRINAAVAKDETQIHTHMCYCEFNDIMDSIVALDADVITIETSRSDMELLESFEAFDYPNEIGPGVYDIHSPNVPSVEWIEALLKKAAQRIPAQRLWVNPDCGLKTRGWPETRAALANMVKAAHNLRQAK</sequence>
<proteinExistence type="inferred from homology"/>
<gene>
    <name evidence="1" type="primary">metE</name>
    <name type="ordered locus">SPA3806</name>
</gene>
<accession>Q5PKP9</accession>
<evidence type="ECO:0000255" key="1">
    <source>
        <dbReference type="HAMAP-Rule" id="MF_00172"/>
    </source>
</evidence>